<proteinExistence type="evidence at protein level"/>
<evidence type="ECO:0000255" key="1"/>
<evidence type="ECO:0000256" key="2">
    <source>
        <dbReference type="SAM" id="MobiDB-lite"/>
    </source>
</evidence>
<evidence type="ECO:0000269" key="3">
    <source>
    </source>
</evidence>
<evidence type="ECO:0000269" key="4">
    <source>
    </source>
</evidence>
<evidence type="ECO:0000269" key="5">
    <source>
    </source>
</evidence>
<evidence type="ECO:0000269" key="6">
    <source>
    </source>
</evidence>
<evidence type="ECO:0000269" key="7">
    <source>
    </source>
</evidence>
<evidence type="ECO:0000269" key="8">
    <source>
    </source>
</evidence>
<evidence type="ECO:0000269" key="9">
    <source>
    </source>
</evidence>
<evidence type="ECO:0000269" key="10">
    <source>
    </source>
</evidence>
<evidence type="ECO:0000305" key="11"/>
<comment type="function">
    <text evidence="3 4 5 6 7 8 9 10">Plays a major role in controlling sexual cell fates. Promotes female development in XX animals where it sequesters one or more of the FEM proteins to the membrane thereby freeing the tra-1 protein (a putative transcription factor) to enter the nucleus and promote female development. In XO animals it acts as a receptor for her-1 which prevents it from binding to FEM proteins thereby repressing the activity of tra-1. Negatively regulates male development when bound to fem-3 and is required together with tra-1 for promoting spermatogenesis. Also required for feminizing tra-3 activity.</text>
</comment>
<comment type="subunit">
    <text evidence="3 5 6 7">Interacts with tra-1 and fem-3.</text>
</comment>
<comment type="interaction">
    <interactant intactId="EBI-367223">
        <id>P34709</id>
    </interactant>
    <interactant intactId="EBI-445465">
        <id>P34691</id>
        <label>fem-3</label>
    </interactant>
    <organismsDiffer>false</organismsDiffer>
    <experiments>4</experiments>
</comment>
<comment type="interaction">
    <interactant intactId="EBI-367223">
        <id>P34709</id>
    </interactant>
    <interactant intactId="EBI-367204">
        <id>P34708</id>
        <label>tra-1</label>
    </interactant>
    <organismsDiffer>false</organismsDiffer>
    <experiments>5</experiments>
</comment>
<comment type="interaction">
    <interactant intactId="EBI-367223">
        <id>P34709</id>
    </interactant>
    <interactant intactId="EBI-367214">
        <id>P34708-1</id>
        <label>tra-1</label>
    </interactant>
    <organismsDiffer>false</organismsDiffer>
    <experiments>5</experiments>
</comment>
<comment type="subcellular location">
    <subcellularLocation>
        <location evidence="8">Membrane</location>
        <topology evidence="8">Multi-pass membrane protein</topology>
    </subcellularLocation>
</comment>
<comment type="alternative products">
    <event type="alternative splicing"/>
    <event type="alternative initiation"/>
    <isoform>
        <id>P34709-1</id>
        <name>Tra-2A</name>
        <name>a</name>
        <sequence type="displayed"/>
    </isoform>
    <isoform>
        <id>P34709-2</id>
        <name>b</name>
        <sequence type="described" ref="VSP_011746 VSP_011747"/>
    </isoform>
    <isoform>
        <id>P34709-3</id>
        <name>Tra-2B</name>
        <sequence type="described" ref="VSP_018823"/>
    </isoform>
</comment>
<comment type="tissue specificity">
    <text evidence="9 10">Somatic and germline tissues. Isoform Tra-2B is specific to oocytes.</text>
</comment>
<comment type="developmental stage">
    <text evidence="9 10">Expressed both maternally and zygotically.</text>
</comment>
<comment type="PTM">
    <text evidence="4">Undergoes cleavage by tra-3 to produce a feminizing carboxy-terminal isoform Tra-2B.</text>
</comment>
<comment type="miscellaneous">
    <text>Isoform Tra-2B is likely to be cytoplasmic because it lacks an N-terminal sequence and potential membrane spanning domains.</text>
</comment>
<comment type="miscellaneous">
    <text>The MX region mediates a post-translational regulation, essential for the onset of hermaphrodite spermatogenesis.</text>
</comment>
<comment type="miscellaneous">
    <molecule>Isoform Tra-2B</molecule>
    <text evidence="11">Produced by alternative initiation at Met-1089 of isoform Tra-2A.</text>
</comment>
<sequence>MKLKYNKLLVSVVIVTFVTFGLLLAECFGKSIDYQEKSIFPSFVSQGFFETRTNNEEYIIEKIAQTQENGVDMRSTLHFTQHGYLLNNISNLKIKFRQKTYTLNDVCFKPHITIFQQSSSSDQNEYPHYIQRLLLEMQRLSPCLIVTPLNCFYDIYRIHGEISNWNKNTDFLNRRLRNSYIEAIGENDERPYVKSNYGPSLIKSWADHMFDLPSKSFTNSTKDALFQKIKLWLLSIEPRQKTCAASIHSCDTPLDSEHYFNICTDMQSVDNFAEKKTKFKLEDVDEEFAMNLDCVDDQEQFIEWMQELEIRKMYSHVTEKPDYPNVVNQTCDKIFHDLNSTGIEFFDGSRSFSSTKSQFDTMQTEIVLLTPEMLLSAMQHSDFVNGFESIWTIEKAEELIHEFRLALKEETEKFKENRMSKMIRVTSRVLDNTVTTKLQSFSEKQTIHFVVNVHSLIVILFTIFVWSGAPLRSAFMFFVRDALTCLLFCFVCSTDGVIVLDTELIKYIIVLTLANLYFTTRSSFCTERLSRCIQREKRFPINSNFASLITVDTMTDSRQIQYFLSTVTKYQAAQDSYSNELFERFPKNWGCTSILIFPIVFVYWYFIDSNFDKICVSVLPSFCLAAGEELFAKNMFWKEREAMQAKQRLENEEQAESITGSSLEKLFAGNKPVSNTDKANIVKKSSIIRNQKPCLQDLSPGTYDVSNFMKYPHQASRIFREKIIGLYLRILKLRTLGVILCIPAILLIVISIGLLFIPVKRETLHTDSKQDDIFIEFEIFNFSTNWKIVNQNLKQFSEDIESIGTLYTISNWQKSFERFEQETNKNASAEWNILFKWINDEPINSAVTLFSEKSSGNQTIANPFKFRLRYGFDAKNETTVIEIVQKIDELLSKCSKNLSPKAVGVLYEHYHRIAVVWNLFAFNQLTTAGIFIILLSIITFIFAITPTIKATFLFSLLVVGTQIEVAALVHLFSLDHHQIYTNLALFAGFLAAWDPFCALLRYRRRILYKSETRRTPELASKRRVLLPIVATADIAQFFVLLITAFSILAIICSIVPELNIFFVPTVILIVIQIVAVFNSIIVSIATKQMFESEVRHYLHRDLRGSTTAVRVYNLVQKQRLASSLDEPQVELDEFSIKRSSPPCRYYAPPPKYSCKKRSRSSDEDEDSDPNQPGPSNRRSPKTGNKRVRGNGDNTELYIPNRYELIVSGKSVGGNTSAAWNGPGSTLEQNMNALEECFELGVDEYDFDEHDGDEGCELVQDMLDRERNLMNKRSTAQRRESRNIEKMKKSQENLDKEKSEEKISESKKNQDDSIESPNLPGTPANLPVDEPLPPVGRLYIVEHVLPEEYRRDPLTEPPSMEDCIRAHSDPNLPPHPRADQYPASFTRPMVEYCEDIYWTHRTGQLPPGLQVPRRPYDYYHITERTPPPEDLNWVPPAESPPIPIPQQAFDLLEERRRNHREQQDEAREGDLSDPEV</sequence>
<accession>P34709</accession>
<accession>Q8STA8</accession>
<accession>Q8STE2</accession>
<accession>Q8T5X5</accession>
<accession>Q8T5X6</accession>
<accession>Q8T5X7</accession>
<accession>Q8T5X8</accession>
<accession>Q8T5X9</accession>
<accession>Q8T5Y0</accession>
<accession>Q8T5Y1</accession>
<accession>Q8T5Y2</accession>
<accession>Q8T5Y3</accession>
<accession>Q8T5Y4</accession>
<accession>Q8T5Y5</accession>
<accession>Q9N5Y5</accession>
<name>TRA2_CAEEL</name>
<organism>
    <name type="scientific">Caenorhabditis elegans</name>
    <dbReference type="NCBI Taxonomy" id="6239"/>
    <lineage>
        <taxon>Eukaryota</taxon>
        <taxon>Metazoa</taxon>
        <taxon>Ecdysozoa</taxon>
        <taxon>Nematoda</taxon>
        <taxon>Chromadorea</taxon>
        <taxon>Rhabditida</taxon>
        <taxon>Rhabditina</taxon>
        <taxon>Rhabditomorpha</taxon>
        <taxon>Rhabditoidea</taxon>
        <taxon>Rhabditidae</taxon>
        <taxon>Peloderinae</taxon>
        <taxon>Caenorhabditis</taxon>
    </lineage>
</organism>
<keyword id="KW-0024">Alternative initiation</keyword>
<keyword id="KW-0025">Alternative splicing</keyword>
<keyword id="KW-0217">Developmental protein</keyword>
<keyword id="KW-0221">Differentiation</keyword>
<keyword id="KW-0472">Membrane</keyword>
<keyword id="KW-0675">Receptor</keyword>
<keyword id="KW-1185">Reference proteome</keyword>
<keyword id="KW-0726">Sexual differentiation</keyword>
<keyword id="KW-0732">Signal</keyword>
<keyword id="KW-0744">Spermatogenesis</keyword>
<keyword id="KW-0812">Transmembrane</keyword>
<keyword id="KW-1133">Transmembrane helix</keyword>
<reference key="1">
    <citation type="journal article" date="1992" name="Mol. Biol. Cell">
        <title>tra-2 encodes a membrane protein and may mediate cell communication in the Caenorhabditis elegans sex determination pathway.</title>
        <authorList>
            <person name="Kuwabara P.E."/>
            <person name="Okkema P.G."/>
            <person name="Kimble J."/>
        </authorList>
    </citation>
    <scope>NUCLEOTIDE SEQUENCE [MRNA] (ISOFORM TRA-2A)</scope>
    <scope>FUNCTION</scope>
    <scope>SUBCELLULAR LOCATION</scope>
    <source>
        <strain>Bristol N2</strain>
    </source>
</reference>
<reference key="2">
    <citation type="journal article" date="1998" name="Dev. Biol.">
        <title>Germ-line regulation of the Caenorhabditis elegans sex-determining gene tra-2.</title>
        <authorList>
            <person name="Kuwabara P.E."/>
            <person name="Okkema P.G."/>
            <person name="Kimble J."/>
        </authorList>
    </citation>
    <scope>NUCLEOTIDE SEQUENCE [MRNA] (ISOFORM TRA-2A)</scope>
    <scope>ALTERNATIVE INITIATION (ISOFORM TRA-2B)</scope>
    <scope>FUNCTION</scope>
    <scope>TISSUE SPECIFICITY</scope>
    <scope>DEVELOPMENTAL STAGE</scope>
    <source>
        <strain>Bristol N2</strain>
    </source>
</reference>
<reference key="3">
    <citation type="journal article" date="1998" name="Science">
        <title>Genome sequence of the nematode C. elegans: a platform for investigating biology.</title>
        <authorList>
            <consortium name="The C. elegans sequencing consortium"/>
        </authorList>
    </citation>
    <scope>NUCLEOTIDE SEQUENCE [LARGE SCALE GENOMIC DNA]</scope>
    <scope>ALTERNATIVE SPLICING</scope>
    <source>
        <strain>Bristol N2</strain>
    </source>
</reference>
<reference key="4">
    <citation type="journal article" date="2002" name="Genetics">
        <title>Levels of DNA polymorphism vary with mating system in the nematode genus Caenorhabditis.</title>
        <authorList>
            <person name="Graustein A."/>
            <person name="Gaspar J.M."/>
            <person name="Walters J.R."/>
            <person name="Palopoli M.F."/>
        </authorList>
    </citation>
    <scope>NUCLEOTIDE SEQUENCE [GENOMIC DNA] OF 11-142</scope>
    <source>
        <strain>AB1</strain>
        <strain>AB2</strain>
        <strain>CB4507</strain>
        <strain>CB4851</strain>
        <strain>CB4852</strain>
        <strain>CB4853</strain>
        <strain>CB4854</strain>
        <strain>CB4855</strain>
        <strain>CB4856</strain>
        <strain>CB4857</strain>
        <strain>CB4858</strain>
        <strain>CB4932</strain>
        <strain>DH424</strain>
        <strain>DR1344</strain>
        <strain>PB303</strain>
        <strain>PB305</strain>
        <strain>PB306</strain>
        <strain>PB307</strain>
        <strain>TR388</strain>
    </source>
</reference>
<reference key="5">
    <citation type="journal article" date="1991" name="EMBO J.">
        <title>Molecular analysis of tra-2, a sex determining gene in C.elegans.</title>
        <authorList>
            <person name="Okkema P.G."/>
            <person name="Kimble J."/>
        </authorList>
    </citation>
    <scope>FUNCTION</scope>
    <scope>TISSUE SPECIFICITY</scope>
    <scope>DEVELOPMENTAL STAGE</scope>
    <source>
        <strain>Bristol N2</strain>
    </source>
</reference>
<reference key="6">
    <citation type="journal article" date="1999" name="Genes Dev.">
        <title>Negative regulation of male development in Caenorhabditis elegans by a protein-protein interaction between TRA-2A and FEM-3.</title>
        <authorList>
            <person name="Mehra A."/>
            <person name="Gaudet J."/>
            <person name="Heck L."/>
            <person name="Kuwabara P.E."/>
            <person name="Spence A.M."/>
        </authorList>
    </citation>
    <scope>FUNCTION</scope>
    <scope>INTERACTION WITH FEM-3</scope>
    <source>
        <strain>Bristol N2</strain>
    </source>
</reference>
<reference key="7">
    <citation type="journal article" date="2000" name="Genes Dev.">
        <title>Proteolysis in Caenorhabditis elegans sex determination: cleavage of TRA-2A by TRA-3.</title>
        <authorList>
            <person name="Sokol S.B."/>
            <person name="Kuwabara P.E."/>
        </authorList>
    </citation>
    <scope>FUNCTION</scope>
    <scope>CLEAVAGE BY TRA-3</scope>
</reference>
<reference key="8">
    <citation type="journal article" date="2000" name="Genes Dev.">
        <title>Direct protein-protein interaction between the intracellular domain of TRA-2 and the transcription factor TRA-1A modulates feminizing activity in C. elegans.</title>
        <authorList>
            <person name="Lum D.H."/>
            <person name="Kuwabara P.E."/>
            <person name="Zarkower D."/>
            <person name="Spence A.M."/>
        </authorList>
    </citation>
    <scope>FUNCTION</scope>
    <scope>INTERACTION WITH TRA-1</scope>
    <scope>MUTAGENESIS OF CYS-1392; GLU-1393 AND ARG-1400</scope>
</reference>
<reference key="9">
    <citation type="journal article" date="2001" name="EMBO J.">
        <title>The TRA-1 transcription factor binds TRA-2 to regulate sexual fates in Caenorhabditis elegans.</title>
        <authorList>
            <person name="Wang S."/>
            <person name="Kimble J."/>
        </authorList>
    </citation>
    <scope>FUNCTION</scope>
    <scope>INTERACTION WITH TRA-1</scope>
    <scope>MUTAGENESIS OF GLU-1393; ARG-1400 AND PRO-1411</scope>
    <source>
        <strain>Bristol N2</strain>
    </source>
</reference>
<reference key="10">
    <citation type="journal article" date="2002" name="Curr. Biol.">
        <title>Rapid coevolution of the nematode sex-determining genes fem-3 and tra-2.</title>
        <authorList>
            <person name="Haag E.S."/>
            <person name="Wang S."/>
            <person name="Kimble J."/>
        </authorList>
    </citation>
    <scope>FUNCTION</scope>
    <scope>INTERACTION WITH FEM-3</scope>
</reference>
<gene>
    <name type="primary">tra-2</name>
    <name type="ORF">C15F1.3</name>
</gene>
<dbReference type="EMBL" id="M91371">
    <property type="protein sequence ID" value="AAA28150.1"/>
    <property type="molecule type" value="mRNA"/>
</dbReference>
<dbReference type="EMBL" id="S42187">
    <property type="protein sequence ID" value="AAB22845.1"/>
    <property type="molecule type" value="mRNA"/>
</dbReference>
<dbReference type="EMBL" id="FO080553">
    <property type="protein sequence ID" value="CCD64611.1"/>
    <property type="molecule type" value="Genomic_DNA"/>
</dbReference>
<dbReference type="EMBL" id="FO080553">
    <property type="protein sequence ID" value="CCD64612.1"/>
    <property type="molecule type" value="Genomic_DNA"/>
</dbReference>
<dbReference type="EMBL" id="AF491489">
    <property type="protein sequence ID" value="AAM09771.1"/>
    <property type="molecule type" value="Genomic_DNA"/>
</dbReference>
<dbReference type="EMBL" id="AF491490">
    <property type="protein sequence ID" value="AAM09772.1"/>
    <property type="molecule type" value="Genomic_DNA"/>
</dbReference>
<dbReference type="EMBL" id="AF491491">
    <property type="protein sequence ID" value="AAM09773.1"/>
    <property type="molecule type" value="Genomic_DNA"/>
</dbReference>
<dbReference type="EMBL" id="AF491492">
    <property type="protein sequence ID" value="AAM09774.1"/>
    <property type="molecule type" value="Genomic_DNA"/>
</dbReference>
<dbReference type="EMBL" id="AF491493">
    <property type="protein sequence ID" value="AAM09775.1"/>
    <property type="molecule type" value="Genomic_DNA"/>
</dbReference>
<dbReference type="EMBL" id="AF491494">
    <property type="protein sequence ID" value="AAM09776.1"/>
    <property type="molecule type" value="Genomic_DNA"/>
</dbReference>
<dbReference type="EMBL" id="AF491495">
    <property type="protein sequence ID" value="AAM09777.1"/>
    <property type="molecule type" value="Genomic_DNA"/>
</dbReference>
<dbReference type="EMBL" id="AF491496">
    <property type="protein sequence ID" value="AAM09778.1"/>
    <property type="molecule type" value="Genomic_DNA"/>
</dbReference>
<dbReference type="EMBL" id="AF491497">
    <property type="protein sequence ID" value="AAM09779.1"/>
    <property type="molecule type" value="Genomic_DNA"/>
</dbReference>
<dbReference type="EMBL" id="AF491498">
    <property type="protein sequence ID" value="AAM09780.1"/>
    <property type="molecule type" value="Genomic_DNA"/>
</dbReference>
<dbReference type="EMBL" id="AF491499">
    <property type="protein sequence ID" value="AAM09781.1"/>
    <property type="molecule type" value="Genomic_DNA"/>
</dbReference>
<dbReference type="EMBL" id="AF491500">
    <property type="protein sequence ID" value="AAM09782.1"/>
    <property type="molecule type" value="Genomic_DNA"/>
</dbReference>
<dbReference type="EMBL" id="AF491501">
    <property type="protein sequence ID" value="AAM09783.1"/>
    <property type="molecule type" value="Genomic_DNA"/>
</dbReference>
<dbReference type="EMBL" id="AF491502">
    <property type="protein sequence ID" value="AAM09784.1"/>
    <property type="molecule type" value="Genomic_DNA"/>
</dbReference>
<dbReference type="EMBL" id="AF491503">
    <property type="protein sequence ID" value="AAM09785.1"/>
    <property type="molecule type" value="Genomic_DNA"/>
</dbReference>
<dbReference type="EMBL" id="AF491504">
    <property type="protein sequence ID" value="AAM09786.1"/>
    <property type="molecule type" value="Genomic_DNA"/>
</dbReference>
<dbReference type="EMBL" id="AF491505">
    <property type="protein sequence ID" value="AAM09787.1"/>
    <property type="molecule type" value="Genomic_DNA"/>
</dbReference>
<dbReference type="EMBL" id="AF491506">
    <property type="protein sequence ID" value="AAM09788.1"/>
    <property type="molecule type" value="Genomic_DNA"/>
</dbReference>
<dbReference type="EMBL" id="AF491507">
    <property type="protein sequence ID" value="AAM09789.1"/>
    <property type="molecule type" value="Genomic_DNA"/>
</dbReference>
<dbReference type="PIR" id="A60026">
    <property type="entry name" value="A60026"/>
</dbReference>
<dbReference type="RefSeq" id="NP_001021954.1">
    <molecule id="P34709-2"/>
    <property type="nucleotide sequence ID" value="NM_001026783.6"/>
</dbReference>
<dbReference type="RefSeq" id="NP_001367508.1">
    <molecule id="P34709-3"/>
    <property type="nucleotide sequence ID" value="NM_001381483.1"/>
</dbReference>
<dbReference type="RefSeq" id="NP_495426.1">
    <molecule id="P34709-1"/>
    <property type="nucleotide sequence ID" value="NM_063025.9"/>
</dbReference>
<dbReference type="BioGRID" id="39475">
    <property type="interactions" value="9"/>
</dbReference>
<dbReference type="FunCoup" id="P34709">
    <property type="interactions" value="1447"/>
</dbReference>
<dbReference type="IntAct" id="P34709">
    <property type="interactions" value="2"/>
</dbReference>
<dbReference type="MINT" id="P34709"/>
<dbReference type="STRING" id="6239.C15F1.3a.1"/>
<dbReference type="iPTMnet" id="P34709"/>
<dbReference type="PaxDb" id="6239-C15F1.3a"/>
<dbReference type="EnsemblMetazoa" id="C15F1.3a.1">
    <molecule id="P34709-1"/>
    <property type="protein sequence ID" value="C15F1.3a.1"/>
    <property type="gene ID" value="WBGene00006605"/>
</dbReference>
<dbReference type="EnsemblMetazoa" id="C15F1.3b.1">
    <molecule id="P34709-2"/>
    <property type="protein sequence ID" value="C15F1.3b.1"/>
    <property type="gene ID" value="WBGene00006605"/>
</dbReference>
<dbReference type="GeneID" id="174137"/>
<dbReference type="KEGG" id="cel:CELE_C15F1.3"/>
<dbReference type="UCSC" id="C15F1.3a.1">
    <molecule id="P34709-1"/>
    <property type="organism name" value="c. elegans"/>
</dbReference>
<dbReference type="AGR" id="WB:WBGene00006605"/>
<dbReference type="CTD" id="174137"/>
<dbReference type="WormBase" id="C15F1.3a">
    <molecule id="P34709-1"/>
    <property type="protein sequence ID" value="CE23546"/>
    <property type="gene ID" value="WBGene00006605"/>
    <property type="gene designation" value="tra-2"/>
</dbReference>
<dbReference type="WormBase" id="C15F1.3b">
    <molecule id="P34709-2"/>
    <property type="protein sequence ID" value="CE23547"/>
    <property type="gene ID" value="WBGene00006605"/>
    <property type="gene designation" value="tra-2"/>
</dbReference>
<dbReference type="eggNOG" id="ENOG502R9RT">
    <property type="taxonomic scope" value="Eukaryota"/>
</dbReference>
<dbReference type="InParanoid" id="P34709"/>
<dbReference type="OMA" id="SIWTIER"/>
<dbReference type="OrthoDB" id="5819423at2759"/>
<dbReference type="SignaLink" id="P34709"/>
<dbReference type="PRO" id="PR:P34709"/>
<dbReference type="Proteomes" id="UP000001940">
    <property type="component" value="Chromosome II"/>
</dbReference>
<dbReference type="Bgee" id="WBGene00006605">
    <property type="expression patterns" value="Expressed in embryo and 4 other cell types or tissues"/>
</dbReference>
<dbReference type="ExpressionAtlas" id="P34709">
    <property type="expression patterns" value="baseline and differential"/>
</dbReference>
<dbReference type="GO" id="GO:0005737">
    <property type="term" value="C:cytoplasm"/>
    <property type="evidence" value="ECO:0000314"/>
    <property type="project" value="WormBase"/>
</dbReference>
<dbReference type="GO" id="GO:0016020">
    <property type="term" value="C:membrane"/>
    <property type="evidence" value="ECO:0000314"/>
    <property type="project" value="UniProtKB"/>
</dbReference>
<dbReference type="GO" id="GO:0005634">
    <property type="term" value="C:nucleus"/>
    <property type="evidence" value="ECO:0000314"/>
    <property type="project" value="WormBase"/>
</dbReference>
<dbReference type="GO" id="GO:0048471">
    <property type="term" value="C:perinuclear region of cytoplasm"/>
    <property type="evidence" value="ECO:0000314"/>
    <property type="project" value="WormBase"/>
</dbReference>
<dbReference type="GO" id="GO:0005886">
    <property type="term" value="C:plasma membrane"/>
    <property type="evidence" value="ECO:0000314"/>
    <property type="project" value="WormBase"/>
</dbReference>
<dbReference type="GO" id="GO:0038023">
    <property type="term" value="F:signaling receptor activity"/>
    <property type="evidence" value="ECO:0000304"/>
    <property type="project" value="UniProtKB"/>
</dbReference>
<dbReference type="GO" id="GO:0004888">
    <property type="term" value="F:transmembrane signaling receptor activity"/>
    <property type="evidence" value="ECO:0000314"/>
    <property type="project" value="WormBase"/>
</dbReference>
<dbReference type="GO" id="GO:0030154">
    <property type="term" value="P:cell differentiation"/>
    <property type="evidence" value="ECO:0007669"/>
    <property type="project" value="UniProtKB-KW"/>
</dbReference>
<dbReference type="GO" id="GO:0018992">
    <property type="term" value="P:germ-line sex determination"/>
    <property type="evidence" value="ECO:0000318"/>
    <property type="project" value="GO_Central"/>
</dbReference>
<dbReference type="GO" id="GO:0040021">
    <property type="term" value="P:hermaphrodite germ-line sex determination"/>
    <property type="evidence" value="ECO:0000315"/>
    <property type="project" value="WormBase"/>
</dbReference>
<dbReference type="GO" id="GO:0042001">
    <property type="term" value="P:hermaphrodite somatic sex determination"/>
    <property type="evidence" value="ECO:0000315"/>
    <property type="project" value="WormBase"/>
</dbReference>
<dbReference type="GO" id="GO:0007530">
    <property type="term" value="P:sex determination"/>
    <property type="evidence" value="ECO:0000315"/>
    <property type="project" value="UniProtKB"/>
</dbReference>
<dbReference type="GO" id="GO:0007548">
    <property type="term" value="P:sex differentiation"/>
    <property type="evidence" value="ECO:0007669"/>
    <property type="project" value="UniProtKB-KW"/>
</dbReference>
<dbReference type="GO" id="GO:0007283">
    <property type="term" value="P:spermatogenesis"/>
    <property type="evidence" value="ECO:0007669"/>
    <property type="project" value="UniProtKB-KW"/>
</dbReference>
<dbReference type="InterPro" id="IPR032848">
    <property type="entry name" value="Ce-Tra-2"/>
</dbReference>
<dbReference type="PANTHER" id="PTHR39365">
    <property type="entry name" value="MX REGION OF TRA-2 RELATED-RELATED"/>
    <property type="match status" value="1"/>
</dbReference>
<dbReference type="PANTHER" id="PTHR39365:SF2">
    <property type="entry name" value="MX REGION OF TRA-2 RELATED-RELATED"/>
    <property type="match status" value="1"/>
</dbReference>
<feature type="signal peptide" evidence="1">
    <location>
        <begin position="1"/>
        <end position="31"/>
    </location>
</feature>
<feature type="chain" id="PRO_0000022574" description="Sex-determining transformer protein 2">
    <location>
        <begin position="32"/>
        <end position="1475"/>
    </location>
</feature>
<feature type="transmembrane region" description="Helical" evidence="1">
    <location>
        <begin position="446"/>
        <end position="466"/>
    </location>
</feature>
<feature type="transmembrane region" description="Helical" evidence="1">
    <location>
        <begin position="474"/>
        <end position="494"/>
    </location>
</feature>
<feature type="transmembrane region" description="Helical" evidence="1">
    <location>
        <begin position="496"/>
        <end position="516"/>
    </location>
</feature>
<feature type="transmembrane region" description="Helical" evidence="1">
    <location>
        <begin position="589"/>
        <end position="609"/>
    </location>
</feature>
<feature type="transmembrane region" description="Helical" evidence="1">
    <location>
        <begin position="737"/>
        <end position="757"/>
    </location>
</feature>
<feature type="transmembrane region" description="Helical" evidence="1">
    <location>
        <begin position="902"/>
        <end position="922"/>
    </location>
</feature>
<feature type="transmembrane region" description="Helical" evidence="1">
    <location>
        <begin position="928"/>
        <end position="948"/>
    </location>
</feature>
<feature type="transmembrane region" description="Helical" evidence="1">
    <location>
        <begin position="952"/>
        <end position="972"/>
    </location>
</feature>
<feature type="transmembrane region" description="Helical" evidence="1">
    <location>
        <begin position="979"/>
        <end position="999"/>
    </location>
</feature>
<feature type="transmembrane region" description="Helical" evidence="1">
    <location>
        <begin position="1034"/>
        <end position="1054"/>
    </location>
</feature>
<feature type="transmembrane region" description="Helical" evidence="1">
    <location>
        <begin position="1060"/>
        <end position="1080"/>
    </location>
</feature>
<feature type="region of interest" description="Interaction with fem-3">
    <location>
        <begin position="1133"/>
        <end position="1273"/>
    </location>
</feature>
<feature type="region of interest" description="Disordered" evidence="2">
    <location>
        <begin position="1142"/>
        <end position="1194"/>
    </location>
</feature>
<feature type="region of interest" description="Disordered" evidence="2">
    <location>
        <begin position="1267"/>
        <end position="1330"/>
    </location>
</feature>
<feature type="region of interest" description="MX regulatory domain; required for tra-1 binding">
    <location>
        <begin position="1392"/>
        <end position="1413"/>
    </location>
</feature>
<feature type="region of interest" description="Disordered" evidence="2">
    <location>
        <begin position="1424"/>
        <end position="1475"/>
    </location>
</feature>
<feature type="compositionally biased region" description="Basic residues" evidence="2">
    <location>
        <begin position="1178"/>
        <end position="1188"/>
    </location>
</feature>
<feature type="compositionally biased region" description="Basic and acidic residues" evidence="2">
    <location>
        <begin position="1276"/>
        <end position="1310"/>
    </location>
</feature>
<feature type="compositionally biased region" description="Basic and acidic residues" evidence="2">
    <location>
        <begin position="1451"/>
        <end position="1469"/>
    </location>
</feature>
<feature type="site" description="Cleavage; by tra-3">
    <location>
        <begin position="1088"/>
        <end position="1089"/>
    </location>
</feature>
<feature type="splice variant" id="VSP_018823" description="In isoform Tra-2B." evidence="11">
    <location>
        <begin position="1"/>
        <end position="1088"/>
    </location>
</feature>
<feature type="splice variant" id="VSP_011746" description="In isoform b." evidence="11">
    <original>AFSILAIICSIVPELNIFFVPTVILIVIQIVAVFNSIIVSIATKQMFESEVRHYLHRDLRGSTTAVRVYNLVQKQRLASSLDEPQVELDEFSIKRSSPPCRYYA</original>
    <variation>EFPKREVTCQNWWPFSSSRSSICSFFFHSHPSSIILATLSIFRQYIYLFSLFSFSHSSSDVSNKKSRGYCRCMSCFSIFFQRVWPQEHWNTANNEKGTQKESGC</variation>
    <location>
        <begin position="1044"/>
        <end position="1147"/>
    </location>
</feature>
<feature type="splice variant" id="VSP_011747" description="In isoform b." evidence="11">
    <location>
        <begin position="1148"/>
        <end position="1475"/>
    </location>
</feature>
<feature type="mutagenesis site" description="Prevents binding with tra-1." evidence="5">
    <original>C</original>
    <variation>Y</variation>
    <location>
        <position position="1392"/>
    </location>
</feature>
<feature type="mutagenesis site" description="Causes weak somatic masculinization; prevents binding with tra-1." evidence="5 6">
    <original>E</original>
    <variation>K</variation>
    <location>
        <position position="1393"/>
    </location>
</feature>
<feature type="mutagenesis site" description="Causes weak somatic masculinization; prevents binding with tra-1." evidence="5 6">
    <original>R</original>
    <variation>Q</variation>
    <location>
        <position position="1400"/>
    </location>
</feature>
<feature type="mutagenesis site" description="Causes weak somatic masculinization." evidence="6">
    <original>P</original>
    <variation>L</variation>
    <location>
        <position position="1411"/>
    </location>
</feature>
<feature type="sequence conflict" description="In Ref. 4; AAM09789." evidence="11" ref="4">
    <original>LLEMQR</original>
    <variation>FLKCNV</variation>
    <location>
        <begin position="134"/>
        <end position="139"/>
    </location>
</feature>
<protein>
    <recommendedName>
        <fullName>Sex-determining transformer protein 2</fullName>
    </recommendedName>
    <alternativeName>
        <fullName>Ce-Tra-2</fullName>
    </alternativeName>
</protein>